<comment type="function">
    <text evidence="1">Catalyzes the stereoinversion of LL-2,6-diaminopimelate (L,L-DAP) to meso-diaminopimelate (meso-DAP), a precursor of L-lysine and an essential component of the bacterial peptidoglycan.</text>
</comment>
<comment type="catalytic activity">
    <reaction evidence="1">
        <text>(2S,6S)-2,6-diaminopimelate = meso-2,6-diaminopimelate</text>
        <dbReference type="Rhea" id="RHEA:15393"/>
        <dbReference type="ChEBI" id="CHEBI:57609"/>
        <dbReference type="ChEBI" id="CHEBI:57791"/>
        <dbReference type="EC" id="5.1.1.7"/>
    </reaction>
</comment>
<comment type="pathway">
    <text evidence="1">Amino-acid biosynthesis; L-lysine biosynthesis via DAP pathway; DL-2,6-diaminopimelate from LL-2,6-diaminopimelate: step 1/1.</text>
</comment>
<comment type="subunit">
    <text evidence="1">Homodimer.</text>
</comment>
<comment type="subcellular location">
    <subcellularLocation>
        <location evidence="1">Cytoplasm</location>
    </subcellularLocation>
</comment>
<comment type="similarity">
    <text evidence="1">Belongs to the diaminopimelate epimerase family.</text>
</comment>
<name>DAPF_SHESR</name>
<organism>
    <name type="scientific">Shewanella sp. (strain MR-7)</name>
    <dbReference type="NCBI Taxonomy" id="60481"/>
    <lineage>
        <taxon>Bacteria</taxon>
        <taxon>Pseudomonadati</taxon>
        <taxon>Pseudomonadota</taxon>
        <taxon>Gammaproteobacteria</taxon>
        <taxon>Alteromonadales</taxon>
        <taxon>Shewanellaceae</taxon>
        <taxon>Shewanella</taxon>
    </lineage>
</organism>
<evidence type="ECO:0000255" key="1">
    <source>
        <dbReference type="HAMAP-Rule" id="MF_00197"/>
    </source>
</evidence>
<protein>
    <recommendedName>
        <fullName evidence="1">Diaminopimelate epimerase</fullName>
        <shortName evidence="1">DAP epimerase</shortName>
        <ecNumber evidence="1">5.1.1.7</ecNumber>
    </recommendedName>
    <alternativeName>
        <fullName evidence="1">PLP-independent amino acid racemase</fullName>
    </alternativeName>
</protein>
<feature type="chain" id="PRO_1000011968" description="Diaminopimelate epimerase">
    <location>
        <begin position="1"/>
        <end position="275"/>
    </location>
</feature>
<feature type="active site" description="Proton donor" evidence="1">
    <location>
        <position position="74"/>
    </location>
</feature>
<feature type="active site" description="Proton acceptor" evidence="1">
    <location>
        <position position="218"/>
    </location>
</feature>
<feature type="binding site" evidence="1">
    <location>
        <position position="12"/>
    </location>
    <ligand>
        <name>substrate</name>
    </ligand>
</feature>
<feature type="binding site" evidence="1">
    <location>
        <position position="45"/>
    </location>
    <ligand>
        <name>substrate</name>
    </ligand>
</feature>
<feature type="binding site" evidence="1">
    <location>
        <position position="65"/>
    </location>
    <ligand>
        <name>substrate</name>
    </ligand>
</feature>
<feature type="binding site" evidence="1">
    <location>
        <begin position="75"/>
        <end position="76"/>
    </location>
    <ligand>
        <name>substrate</name>
    </ligand>
</feature>
<feature type="binding site" evidence="1">
    <location>
        <position position="158"/>
    </location>
    <ligand>
        <name>substrate</name>
    </ligand>
</feature>
<feature type="binding site" evidence="1">
    <location>
        <position position="191"/>
    </location>
    <ligand>
        <name>substrate</name>
    </ligand>
</feature>
<feature type="binding site" evidence="1">
    <location>
        <begin position="209"/>
        <end position="210"/>
    </location>
    <ligand>
        <name>substrate</name>
    </ligand>
</feature>
<feature type="binding site" evidence="1">
    <location>
        <begin position="219"/>
        <end position="220"/>
    </location>
    <ligand>
        <name>substrate</name>
    </ligand>
</feature>
<feature type="site" description="Could be important to modulate the pK values of the two catalytic cysteine residues" evidence="1">
    <location>
        <position position="160"/>
    </location>
</feature>
<feature type="site" description="Could be important to modulate the pK values of the two catalytic cysteine residues" evidence="1">
    <location>
        <position position="209"/>
    </location>
</feature>
<feature type="site" description="Important for dimerization" evidence="1">
    <location>
        <position position="269"/>
    </location>
</feature>
<accession>Q0HQJ2</accession>
<dbReference type="EC" id="5.1.1.7" evidence="1"/>
<dbReference type="EMBL" id="CP000444">
    <property type="protein sequence ID" value="ABI44613.1"/>
    <property type="molecule type" value="Genomic_DNA"/>
</dbReference>
<dbReference type="SMR" id="Q0HQJ2"/>
<dbReference type="KEGG" id="shm:Shewmr7_3633"/>
<dbReference type="HOGENOM" id="CLU_053306_1_1_6"/>
<dbReference type="UniPathway" id="UPA00034">
    <property type="reaction ID" value="UER00025"/>
</dbReference>
<dbReference type="GO" id="GO:0005829">
    <property type="term" value="C:cytosol"/>
    <property type="evidence" value="ECO:0007669"/>
    <property type="project" value="TreeGrafter"/>
</dbReference>
<dbReference type="GO" id="GO:0008837">
    <property type="term" value="F:diaminopimelate epimerase activity"/>
    <property type="evidence" value="ECO:0007669"/>
    <property type="project" value="UniProtKB-UniRule"/>
</dbReference>
<dbReference type="GO" id="GO:0009089">
    <property type="term" value="P:lysine biosynthetic process via diaminopimelate"/>
    <property type="evidence" value="ECO:0007669"/>
    <property type="project" value="UniProtKB-UniRule"/>
</dbReference>
<dbReference type="FunFam" id="3.10.310.10:FF:000001">
    <property type="entry name" value="Diaminopimelate epimerase"/>
    <property type="match status" value="1"/>
</dbReference>
<dbReference type="FunFam" id="3.10.310.10:FF:000002">
    <property type="entry name" value="Diaminopimelate epimerase"/>
    <property type="match status" value="1"/>
</dbReference>
<dbReference type="Gene3D" id="3.10.310.10">
    <property type="entry name" value="Diaminopimelate Epimerase, Chain A, domain 1"/>
    <property type="match status" value="2"/>
</dbReference>
<dbReference type="HAMAP" id="MF_00197">
    <property type="entry name" value="DAP_epimerase"/>
    <property type="match status" value="1"/>
</dbReference>
<dbReference type="InterPro" id="IPR018510">
    <property type="entry name" value="DAP_epimerase_AS"/>
</dbReference>
<dbReference type="InterPro" id="IPR001653">
    <property type="entry name" value="DAP_epimerase_DapF"/>
</dbReference>
<dbReference type="NCBIfam" id="TIGR00652">
    <property type="entry name" value="DapF"/>
    <property type="match status" value="1"/>
</dbReference>
<dbReference type="PANTHER" id="PTHR31689:SF0">
    <property type="entry name" value="DIAMINOPIMELATE EPIMERASE"/>
    <property type="match status" value="1"/>
</dbReference>
<dbReference type="PANTHER" id="PTHR31689">
    <property type="entry name" value="DIAMINOPIMELATE EPIMERASE, CHLOROPLASTIC"/>
    <property type="match status" value="1"/>
</dbReference>
<dbReference type="Pfam" id="PF01678">
    <property type="entry name" value="DAP_epimerase"/>
    <property type="match status" value="2"/>
</dbReference>
<dbReference type="SUPFAM" id="SSF54506">
    <property type="entry name" value="Diaminopimelate epimerase-like"/>
    <property type="match status" value="1"/>
</dbReference>
<dbReference type="PROSITE" id="PS01326">
    <property type="entry name" value="DAP_EPIMERASE"/>
    <property type="match status" value="1"/>
</dbReference>
<keyword id="KW-0028">Amino-acid biosynthesis</keyword>
<keyword id="KW-0963">Cytoplasm</keyword>
<keyword id="KW-0413">Isomerase</keyword>
<keyword id="KW-0457">Lysine biosynthesis</keyword>
<proteinExistence type="inferred from homology"/>
<reference key="1">
    <citation type="submission" date="2006-08" db="EMBL/GenBank/DDBJ databases">
        <title>Complete sequence of chromosome 1 of Shewanella sp. MR-7.</title>
        <authorList>
            <person name="Copeland A."/>
            <person name="Lucas S."/>
            <person name="Lapidus A."/>
            <person name="Barry K."/>
            <person name="Detter J.C."/>
            <person name="Glavina del Rio T."/>
            <person name="Hammon N."/>
            <person name="Israni S."/>
            <person name="Dalin E."/>
            <person name="Tice H."/>
            <person name="Pitluck S."/>
            <person name="Kiss H."/>
            <person name="Brettin T."/>
            <person name="Bruce D."/>
            <person name="Han C."/>
            <person name="Tapia R."/>
            <person name="Gilna P."/>
            <person name="Schmutz J."/>
            <person name="Larimer F."/>
            <person name="Land M."/>
            <person name="Hauser L."/>
            <person name="Kyrpides N."/>
            <person name="Mikhailova N."/>
            <person name="Nealson K."/>
            <person name="Konstantinidis K."/>
            <person name="Klappenbach J."/>
            <person name="Tiedje J."/>
            <person name="Richardson P."/>
        </authorList>
    </citation>
    <scope>NUCLEOTIDE SEQUENCE [LARGE SCALE GENOMIC DNA]</scope>
    <source>
        <strain>MR-7</strain>
    </source>
</reference>
<gene>
    <name evidence="1" type="primary">dapF</name>
    <name type="ordered locus">Shewmr7_3633</name>
</gene>
<sequence length="275" mass="30083">MIQFTKMHGLGNDFMVVDGVTQNVFFSPEQIRRLADRNFGVGFDQLLLVEPPYDPDLDFHYRIFNADGGEVENCGNGARCFARFVRNKGLTNKNKIRVSTSAGKMTLRLERDGTVTVNMGVPVLDPSQIPFKAKKAEKTYLLQTSQQTFLCGAASMGNPHCVLDVEDVANANVAEIGALLTKHERFPRGVNVGFMQVVNSGHIKLRVYERGAAETLACGTGACAAVVVGQIQGKLDQQVRVDLPGGTLTINWEGEGKPLWMTGPAQHVYDGQIQL</sequence>